<protein>
    <recommendedName>
        <fullName>V-type proton ATPase subunit c2</fullName>
        <shortName>V-ATPase subunit c2</shortName>
    </recommendedName>
    <alternativeName>
        <fullName>V-type proton ATPase 16 kDa proteolipid subunit c2</fullName>
        <shortName>V-ATPase 16 kDa proteolipid subunit c2</shortName>
    </alternativeName>
    <alternativeName>
        <fullName>Vacuolar H(+)-ATPase subunit c isoform 2</fullName>
    </alternativeName>
    <alternativeName>
        <fullName>Vacuolar proton pump 16 kDa proteolipid subunit c2</fullName>
    </alternativeName>
    <alternativeName>
        <fullName>Vacuolar proton pump subunit c2</fullName>
    </alternativeName>
</protein>
<dbReference type="EMBL" id="L44582">
    <property type="protein sequence ID" value="AAA99934.1"/>
    <property type="molecule type" value="mRNA"/>
</dbReference>
<dbReference type="EMBL" id="L44585">
    <property type="protein sequence ID" value="AAA99937.1"/>
    <property type="molecule type" value="mRNA"/>
</dbReference>
<dbReference type="EMBL" id="AC007797">
    <property type="protein sequence ID" value="AAG12542.1"/>
    <property type="molecule type" value="Genomic_DNA"/>
</dbReference>
<dbReference type="EMBL" id="CP002684">
    <property type="protein sequence ID" value="AEE29912.1"/>
    <property type="molecule type" value="Genomic_DNA"/>
</dbReference>
<dbReference type="EMBL" id="U59737">
    <property type="protein sequence ID" value="AAB09472.1"/>
    <property type="molecule type" value="Genomic_DNA"/>
</dbReference>
<dbReference type="PIR" id="S60132">
    <property type="entry name" value="S60132"/>
</dbReference>
<dbReference type="RefSeq" id="NP_564098.2">
    <property type="nucleotide sequence ID" value="NM_101846.4"/>
</dbReference>
<dbReference type="SMR" id="P59228"/>
<dbReference type="FunCoup" id="P59228">
    <property type="interactions" value="3201"/>
</dbReference>
<dbReference type="STRING" id="3702.P59228"/>
<dbReference type="TCDB" id="3.A.2.2.5">
    <property type="family name" value="the h+- or na+-translocating f-type, v-type and a-type atpase (f-atpase) superfamily"/>
</dbReference>
<dbReference type="PaxDb" id="3702-AT1G19910.1"/>
<dbReference type="EnsemblPlants" id="AT1G19910.1">
    <property type="protein sequence ID" value="AT1G19910.1"/>
    <property type="gene ID" value="AT1G19910"/>
</dbReference>
<dbReference type="GeneID" id="838579"/>
<dbReference type="Gramene" id="AT1G19910.1">
    <property type="protein sequence ID" value="AT1G19910.1"/>
    <property type="gene ID" value="AT1G19910"/>
</dbReference>
<dbReference type="KEGG" id="ath:AT1G19910"/>
<dbReference type="Araport" id="AT1G19910"/>
<dbReference type="TAIR" id="AT1G19910">
    <property type="gene designation" value="AVA-P2"/>
</dbReference>
<dbReference type="eggNOG" id="KOG0232">
    <property type="taxonomic scope" value="Eukaryota"/>
</dbReference>
<dbReference type="HOGENOM" id="CLU_085752_1_0_1"/>
<dbReference type="InParanoid" id="P59228"/>
<dbReference type="OMA" id="MSVCPPY"/>
<dbReference type="OrthoDB" id="1106591at2759"/>
<dbReference type="PhylomeDB" id="P59228"/>
<dbReference type="PRO" id="PR:P59228"/>
<dbReference type="Proteomes" id="UP000006548">
    <property type="component" value="Chromosome 1"/>
</dbReference>
<dbReference type="ExpressionAtlas" id="P59228">
    <property type="expression patterns" value="baseline and differential"/>
</dbReference>
<dbReference type="GO" id="GO:0000325">
    <property type="term" value="C:plant-type vacuole"/>
    <property type="evidence" value="ECO:0007005"/>
    <property type="project" value="TAIR"/>
</dbReference>
<dbReference type="GO" id="GO:0000220">
    <property type="term" value="C:vacuolar proton-transporting V-type ATPase, V0 domain"/>
    <property type="evidence" value="ECO:0000250"/>
    <property type="project" value="TAIR"/>
</dbReference>
<dbReference type="GO" id="GO:0005773">
    <property type="term" value="C:vacuole"/>
    <property type="evidence" value="ECO:0007005"/>
    <property type="project" value="TAIR"/>
</dbReference>
<dbReference type="GO" id="GO:0046961">
    <property type="term" value="F:proton-transporting ATPase activity, rotational mechanism"/>
    <property type="evidence" value="ECO:0007669"/>
    <property type="project" value="InterPro"/>
</dbReference>
<dbReference type="CDD" id="cd18175">
    <property type="entry name" value="ATP-synt_Vo_c_ATP6C_rpt1"/>
    <property type="match status" value="1"/>
</dbReference>
<dbReference type="CDD" id="cd18176">
    <property type="entry name" value="ATP-synt_Vo_c_ATP6C_rpt2"/>
    <property type="match status" value="1"/>
</dbReference>
<dbReference type="FunFam" id="1.20.120.610:FF:000003">
    <property type="entry name" value="V-type proton ATPase proteolipid subunit"/>
    <property type="match status" value="1"/>
</dbReference>
<dbReference type="Gene3D" id="1.20.120.610">
    <property type="entry name" value="lithium bound rotor ring of v- atpase"/>
    <property type="match status" value="1"/>
</dbReference>
<dbReference type="InterPro" id="IPR002379">
    <property type="entry name" value="ATPase_proteolipid_c-like_dom"/>
</dbReference>
<dbReference type="InterPro" id="IPR000245">
    <property type="entry name" value="ATPase_proteolipid_csu"/>
</dbReference>
<dbReference type="InterPro" id="IPR011555">
    <property type="entry name" value="ATPase_proteolipid_su_C_euk"/>
</dbReference>
<dbReference type="InterPro" id="IPR035921">
    <property type="entry name" value="F/V-ATP_Csub_sf"/>
</dbReference>
<dbReference type="NCBIfam" id="TIGR01100">
    <property type="entry name" value="V_ATP_synt_C"/>
    <property type="match status" value="1"/>
</dbReference>
<dbReference type="PANTHER" id="PTHR10263">
    <property type="entry name" value="V-TYPE PROTON ATPASE PROTEOLIPID SUBUNIT"/>
    <property type="match status" value="1"/>
</dbReference>
<dbReference type="Pfam" id="PF00137">
    <property type="entry name" value="ATP-synt_C"/>
    <property type="match status" value="2"/>
</dbReference>
<dbReference type="PRINTS" id="PR00122">
    <property type="entry name" value="VACATPASE"/>
</dbReference>
<dbReference type="SUPFAM" id="SSF81333">
    <property type="entry name" value="F1F0 ATP synthase subunit C"/>
    <property type="match status" value="2"/>
</dbReference>
<name>VATL2_ARATH</name>
<keyword id="KW-0375">Hydrogen ion transport</keyword>
<keyword id="KW-0406">Ion transport</keyword>
<keyword id="KW-0472">Membrane</keyword>
<keyword id="KW-1185">Reference proteome</keyword>
<keyword id="KW-0812">Transmembrane</keyword>
<keyword id="KW-1133">Transmembrane helix</keyword>
<keyword id="KW-0813">Transport</keyword>
<keyword id="KW-0926">Vacuole</keyword>
<feature type="chain" id="PRO_0000071764" description="V-type proton ATPase subunit c2">
    <location>
        <begin position="1"/>
        <end position="165"/>
    </location>
</feature>
<feature type="topological domain" description="Lumenal" evidence="2">
    <location>
        <begin position="1"/>
        <end position="12"/>
    </location>
</feature>
<feature type="transmembrane region" description="Helical" evidence="2">
    <location>
        <begin position="13"/>
        <end position="33"/>
    </location>
</feature>
<feature type="topological domain" description="Cytoplasmic" evidence="2">
    <location>
        <begin position="34"/>
        <end position="55"/>
    </location>
</feature>
<feature type="transmembrane region" description="Helical" evidence="2">
    <location>
        <begin position="56"/>
        <end position="76"/>
    </location>
</feature>
<feature type="topological domain" description="Lumenal" evidence="2">
    <location>
        <begin position="77"/>
        <end position="95"/>
    </location>
</feature>
<feature type="transmembrane region" description="Helical" evidence="2">
    <location>
        <begin position="96"/>
        <end position="117"/>
    </location>
</feature>
<feature type="topological domain" description="Cytoplasmic" evidence="2">
    <location>
        <begin position="118"/>
        <end position="129"/>
    </location>
</feature>
<feature type="transmembrane region" description="Helical" evidence="2">
    <location>
        <begin position="130"/>
        <end position="155"/>
    </location>
</feature>
<feature type="topological domain" description="Lumenal" evidence="2">
    <location>
        <begin position="156"/>
        <end position="165"/>
    </location>
</feature>
<feature type="site" description="Essential for proton translocation" evidence="1">
    <location>
        <position position="142"/>
    </location>
</feature>
<accession>P59228</accession>
<accession>Q39037</accession>
<accession>Q39038</accession>
<accession>Q39039</accession>
<accession>Q42424</accession>
<accession>Q96298</accession>
<comment type="function">
    <text>Proton-conducting pore forming subunit of the membrane integral V0 complex of vacuolar ATPase. V-ATPase is responsible for acidifying a variety of intracellular compartments in eukaryotic cells.</text>
</comment>
<comment type="subunit">
    <text>V-ATPase is a heteromultimeric enzyme composed of a peripheral catalytic V1 complex (components A to H) attached to an integral membrane V0 proton pore complex (components: a, c, c'', d and e). The proteolipid components c and c'' are present as a hexameric ring that forms the proton-conducting pore.</text>
</comment>
<comment type="subcellular location">
    <subcellularLocation>
        <location>Vacuole membrane</location>
        <topology>Multi-pass membrane protein</topology>
    </subcellularLocation>
    <text>Tonoplast.</text>
</comment>
<comment type="tissue specificity">
    <text>Expressed in leaf, root, flower and silique, with lower expression in roots.</text>
</comment>
<comment type="similarity">
    <text evidence="3">Belongs to the V-ATPase proteolipid subunit family.</text>
</comment>
<organism>
    <name type="scientific">Arabidopsis thaliana</name>
    <name type="common">Mouse-ear cress</name>
    <dbReference type="NCBI Taxonomy" id="3702"/>
    <lineage>
        <taxon>Eukaryota</taxon>
        <taxon>Viridiplantae</taxon>
        <taxon>Streptophyta</taxon>
        <taxon>Embryophyta</taxon>
        <taxon>Tracheophyta</taxon>
        <taxon>Spermatophyta</taxon>
        <taxon>Magnoliopsida</taxon>
        <taxon>eudicotyledons</taxon>
        <taxon>Gunneridae</taxon>
        <taxon>Pentapetalae</taxon>
        <taxon>rosids</taxon>
        <taxon>malvids</taxon>
        <taxon>Brassicales</taxon>
        <taxon>Brassicaceae</taxon>
        <taxon>Camelineae</taxon>
        <taxon>Arabidopsis</taxon>
    </lineage>
</organism>
<proteinExistence type="evidence at transcript level"/>
<evidence type="ECO:0000250" key="1"/>
<evidence type="ECO:0000255" key="2"/>
<evidence type="ECO:0000305" key="3"/>
<gene>
    <name type="primary">VHA-c2</name>
    <name type="synonym">AVA-P2</name>
    <name type="synonym">AVAP2</name>
    <name type="ordered locus">At1g19910</name>
    <name type="ORF">F6F9.3</name>
</gene>
<reference key="1">
    <citation type="journal article" date="1995" name="Plant Mol. Biol.">
        <title>Several distinct genes encode nearly identical to 16 kDa proteolipids of the vacuolar H(+)-ATPase from Arabidopsis thaliana.</title>
        <authorList>
            <person name="Perera I.Y."/>
            <person name="Li X."/>
            <person name="Sze H."/>
        </authorList>
    </citation>
    <scope>NUCLEOTIDE SEQUENCE [MRNA]</scope>
    <source>
        <strain>cv. Columbia</strain>
    </source>
</reference>
<reference key="2">
    <citation type="journal article" date="2000" name="Nature">
        <title>Sequence and analysis of chromosome 1 of the plant Arabidopsis thaliana.</title>
        <authorList>
            <person name="Theologis A."/>
            <person name="Ecker J.R."/>
            <person name="Palm C.J."/>
            <person name="Federspiel N.A."/>
            <person name="Kaul S."/>
            <person name="White O."/>
            <person name="Alonso J."/>
            <person name="Altafi H."/>
            <person name="Araujo R."/>
            <person name="Bowman C.L."/>
            <person name="Brooks S.Y."/>
            <person name="Buehler E."/>
            <person name="Chan A."/>
            <person name="Chao Q."/>
            <person name="Chen H."/>
            <person name="Cheuk R.F."/>
            <person name="Chin C.W."/>
            <person name="Chung M.K."/>
            <person name="Conn L."/>
            <person name="Conway A.B."/>
            <person name="Conway A.R."/>
            <person name="Creasy T.H."/>
            <person name="Dewar K."/>
            <person name="Dunn P."/>
            <person name="Etgu P."/>
            <person name="Feldblyum T.V."/>
            <person name="Feng J.-D."/>
            <person name="Fong B."/>
            <person name="Fujii C.Y."/>
            <person name="Gill J.E."/>
            <person name="Goldsmith A.D."/>
            <person name="Haas B."/>
            <person name="Hansen N.F."/>
            <person name="Hughes B."/>
            <person name="Huizar L."/>
            <person name="Hunter J.L."/>
            <person name="Jenkins J."/>
            <person name="Johnson-Hopson C."/>
            <person name="Khan S."/>
            <person name="Khaykin E."/>
            <person name="Kim C.J."/>
            <person name="Koo H.L."/>
            <person name="Kremenetskaia I."/>
            <person name="Kurtz D.B."/>
            <person name="Kwan A."/>
            <person name="Lam B."/>
            <person name="Langin-Hooper S."/>
            <person name="Lee A."/>
            <person name="Lee J.M."/>
            <person name="Lenz C.A."/>
            <person name="Li J.H."/>
            <person name="Li Y.-P."/>
            <person name="Lin X."/>
            <person name="Liu S.X."/>
            <person name="Liu Z.A."/>
            <person name="Luros J.S."/>
            <person name="Maiti R."/>
            <person name="Marziali A."/>
            <person name="Militscher J."/>
            <person name="Miranda M."/>
            <person name="Nguyen M."/>
            <person name="Nierman W.C."/>
            <person name="Osborne B.I."/>
            <person name="Pai G."/>
            <person name="Peterson J."/>
            <person name="Pham P.K."/>
            <person name="Rizzo M."/>
            <person name="Rooney T."/>
            <person name="Rowley D."/>
            <person name="Sakano H."/>
            <person name="Salzberg S.L."/>
            <person name="Schwartz J.R."/>
            <person name="Shinn P."/>
            <person name="Southwick A.M."/>
            <person name="Sun H."/>
            <person name="Tallon L.J."/>
            <person name="Tambunga G."/>
            <person name="Toriumi M.J."/>
            <person name="Town C.D."/>
            <person name="Utterback T."/>
            <person name="Van Aken S."/>
            <person name="Vaysberg M."/>
            <person name="Vysotskaia V.S."/>
            <person name="Walker M."/>
            <person name="Wu D."/>
            <person name="Yu G."/>
            <person name="Fraser C.M."/>
            <person name="Venter J.C."/>
            <person name="Davis R.W."/>
        </authorList>
    </citation>
    <scope>NUCLEOTIDE SEQUENCE [LARGE SCALE GENOMIC DNA]</scope>
    <source>
        <strain>cv. Columbia</strain>
    </source>
</reference>
<reference key="3">
    <citation type="journal article" date="2017" name="Plant J.">
        <title>Araport11: a complete reannotation of the Arabidopsis thaliana reference genome.</title>
        <authorList>
            <person name="Cheng C.Y."/>
            <person name="Krishnakumar V."/>
            <person name="Chan A.P."/>
            <person name="Thibaud-Nissen F."/>
            <person name="Schobel S."/>
            <person name="Town C.D."/>
        </authorList>
    </citation>
    <scope>GENOME REANNOTATION</scope>
    <source>
        <strain>cv. Columbia</strain>
    </source>
</reference>
<reference key="4">
    <citation type="submission" date="1996-06" db="EMBL/GenBank/DDBJ databases">
        <authorList>
            <person name="Leustek T."/>
        </authorList>
    </citation>
    <scope>NUCLEOTIDE SEQUENCE [GENOMIC DNA] OF 110-165</scope>
    <source>
        <strain>cv. Landsberg erecta</strain>
    </source>
</reference>
<reference key="5">
    <citation type="journal article" date="2002" name="Trends Plant Sci.">
        <title>A simple nomenclature for a complex proton pump: VHA genes encode the vacuolar H(+)-ATPase.</title>
        <authorList>
            <person name="Sze H."/>
            <person name="Schumacher K."/>
            <person name="Mueller M.L."/>
            <person name="Padmanaban S."/>
            <person name="Taiz L."/>
        </authorList>
    </citation>
    <scope>GENE FAMILY</scope>
    <scope>NOMENCLATURE</scope>
</reference>
<sequence>MASTFSGDETAPFFGFLGAAAALVFSCMGAAYGTAKSGVGVASMGVMRPELVMKSIVPVVMAGVLGIYGLIIAVIISTGINPKAKSYYLFDGYAHLSSGLACGLAGLSAGMAIGIVGDAGVRANAQQPKLFVGMILILIFAEALALYGLIVGIILSSRAGQSRAE</sequence>